<comment type="function">
    <text evidence="7 9 10 11 14 15 16 17">Component of a Polycomb group (PcG) multiprotein PRC1-like complex, a complex class required to maintain the transcriptionally repressive state of many genes, including Hox genes, throughout development. PcG PRC1 complex acts via chromatin remodeling and modification of histones; it mediates monoubiquitination of histone H2A 'Lys-119', rendering chromatin heritably changed in its expressibility (PubMed:15386022, PubMed:16359901, PubMed:16714294, PubMed:21772249, PubMed:25355358, PubMed:26151332, PubMed:27827373). The complex composed of RNF2, UB2D3 and BMI1 binds nucleosomes, and has activity only with nucleosomal histone H2A (PubMed:21772249, PubMed:25355358). In the PRC1-like complex, regulates the E3 ubiquitin-protein ligase activity of RNF2/RING2 (PubMed:15386022, PubMed:21772249, PubMed:26151332).</text>
</comment>
<comment type="subunit">
    <text evidence="2 6 7 8 10 11 12 13 14 15 16 17 18 19">Component of a PRC1-like complex (PubMed:12167701, PubMed:15386022, PubMed:19636380, PubMed:21282530, PubMed:21772249, PubMed:25355358, PubMed:26151332). Identified in a PRC1-like HPRC-H complex with CBX2, CBX4, CBX8, PHC1, PHC2, PHC3 RING1 and RNF2 (PubMed:12167701). Interacts with RNF2/RING2 (PubMed:16714294, PubMed:21772249, PubMed:25355358). Interacts with RING1 (By similarity). Part of a complex that contains RNF2, UB2D3 and BMI1, where RNF2 and BMI1 form a tight heterodimer, and UB2D3 interacts only with RNF2 (PubMed:21772249, PubMed:25355358). The complex composed of RNF2, UB2D3 and BMI1 binds nucleosomes, and has activity only with nucleosomal histone H2A (PubMed:21772249, PubMed:25355358). Interacts with CBX7 and CBX8 (PubMed:19636380). Interacts with SPOP (PubMed:15897469). Part of a complex consisting of BMI1, CUL3 and SPOP (PubMed:15897469). Interacts with E4F1 (PubMed:16882984). Interacts with PHC2 (PubMed:27827373, PubMed:9121482, PubMed:9199346). Interacts with zinc finger protein ZNF277 (By similarity). May be part of a complex including at least ZNF277, BMI1 and RNF2/RING2 (By similarity).</text>
</comment>
<comment type="interaction">
    <interactant intactId="EBI-2341576">
        <id>P35226</id>
    </interactant>
    <interactant intactId="EBI-722425">
        <id>O00257</id>
        <label>CBX4</label>
    </interactant>
    <organismsDiffer>false</organismsDiffer>
    <experiments>9</experiments>
</comment>
<comment type="interaction">
    <interactant intactId="EBI-2341576">
        <id>P35226</id>
    </interactant>
    <interactant intactId="EBI-4392727">
        <id>O00257-3</id>
        <label>CBX4</label>
    </interactant>
    <organismsDiffer>false</organismsDiffer>
    <experiments>2</experiments>
</comment>
<comment type="interaction">
    <interactant intactId="EBI-2341576">
        <id>P35226</id>
    </interactant>
    <interactant intactId="EBI-3951758">
        <id>O95503</id>
        <label>CBX6</label>
    </interactant>
    <organismsDiffer>false</organismsDiffer>
    <experiments>10</experiments>
</comment>
<comment type="interaction">
    <interactant intactId="EBI-2341576">
        <id>P35226</id>
    </interactant>
    <interactant intactId="EBI-3923843">
        <id>O95931</id>
        <label>CBX7</label>
    </interactant>
    <organismsDiffer>false</organismsDiffer>
    <experiments>14</experiments>
</comment>
<comment type="interaction">
    <interactant intactId="EBI-2341576">
        <id>P35226</id>
    </interactant>
    <interactant intactId="EBI-712912">
        <id>Q9HC52</id>
        <label>CBX8</label>
    </interactant>
    <organismsDiffer>false</organismsDiffer>
    <experiments>31</experiments>
</comment>
<comment type="interaction">
    <interactant intactId="EBI-2341576">
        <id>P35226</id>
    </interactant>
    <interactant intactId="EBI-347804">
        <id>P68400</id>
        <label>CSNK2A1</label>
    </interactant>
    <organismsDiffer>false</organismsDiffer>
    <experiments>2</experiments>
</comment>
<comment type="interaction">
    <interactant intactId="EBI-2341576">
        <id>P35226</id>
    </interactant>
    <interactant intactId="EBI-7116203">
        <id>O75031</id>
        <label>HSF2BP</label>
    </interactant>
    <organismsDiffer>false</organismsDiffer>
    <experiments>3</experiments>
</comment>
<comment type="interaction">
    <interactant intactId="EBI-2341576">
        <id>P35226</id>
    </interactant>
    <interactant intactId="EBI-1055820">
        <id>Q9HCE1</id>
        <label>MOV10</label>
    </interactant>
    <organismsDiffer>false</organismsDiffer>
    <experiments>4</experiments>
</comment>
<comment type="interaction">
    <interactant intactId="EBI-2341576">
        <id>P35226</id>
    </interactant>
    <interactant intactId="EBI-928842">
        <id>Q9GZM8</id>
        <label>NDEL1</label>
    </interactant>
    <organismsDiffer>false</organismsDiffer>
    <experiments>3</experiments>
</comment>
<comment type="interaction">
    <interactant intactId="EBI-2341576">
        <id>P35226</id>
    </interactant>
    <interactant intactId="EBI-725403">
        <id>P78364</id>
        <label>PHC1</label>
    </interactant>
    <organismsDiffer>false</organismsDiffer>
    <experiments>8</experiments>
</comment>
<comment type="interaction">
    <interactant intactId="EBI-2341576">
        <id>P35226</id>
    </interactant>
    <interactant intactId="EBI-713786">
        <id>Q8IXK0</id>
        <label>PHC2</label>
    </interactant>
    <organismsDiffer>false</organismsDiffer>
    <experiments>10</experiments>
</comment>
<comment type="interaction">
    <interactant intactId="EBI-2341576">
        <id>P35226</id>
    </interactant>
    <interactant intactId="EBI-536755">
        <id>O94906</id>
        <label>PRPF6</label>
    </interactant>
    <organismsDiffer>false</organismsDiffer>
    <experiments>8</experiments>
</comment>
<comment type="interaction">
    <interactant intactId="EBI-2341576">
        <id>P35226</id>
    </interactant>
    <interactant intactId="EBI-696162">
        <id>P60484</id>
        <label>PTEN</label>
    </interactant>
    <organismsDiffer>false</organismsDiffer>
    <experiments>7</experiments>
</comment>
<comment type="interaction">
    <interactant intactId="EBI-2341576">
        <id>P35226</id>
    </interactant>
    <interactant intactId="EBI-752313">
        <id>Q06587</id>
        <label>RING1</label>
    </interactant>
    <organismsDiffer>false</organismsDiffer>
    <experiments>23</experiments>
</comment>
<comment type="interaction">
    <interactant intactId="EBI-2341576">
        <id>P35226</id>
    </interactant>
    <interactant intactId="EBI-722416">
        <id>Q99496</id>
        <label>RNF2</label>
    </interactant>
    <organismsDiffer>false</organismsDiffer>
    <experiments>22</experiments>
</comment>
<comment type="interaction">
    <interactant intactId="EBI-2341576">
        <id>P35226</id>
    </interactant>
    <interactant intactId="EBI-3390054">
        <id>P0CG48</id>
        <label>UBC</label>
    </interactant>
    <organismsDiffer>false</organismsDiffer>
    <experiments>2</experiments>
</comment>
<comment type="interaction">
    <interactant intactId="EBI-2341576">
        <id>P35226</id>
    </interactant>
    <interactant intactId="EBI-306876">
        <id>P51784</id>
        <label>USP11</label>
    </interactant>
    <organismsDiffer>false</organismsDiffer>
    <experiments>7</experiments>
</comment>
<comment type="interaction">
    <interactant intactId="EBI-2341576">
        <id>P35226</id>
    </interactant>
    <interactant intactId="EBI-302474">
        <id>Q93009</id>
        <label>USP7</label>
    </interactant>
    <organismsDiffer>false</organismsDiffer>
    <experiments>7</experiments>
</comment>
<comment type="interaction">
    <interactant intactId="EBI-2341576">
        <id>P35226</id>
    </interactant>
    <interactant intactId="EBI-373380">
        <id>Q9H270</id>
        <label>VPS11</label>
    </interactant>
    <organismsDiffer>false</organismsDiffer>
    <experiments>2</experiments>
</comment>
<comment type="interaction">
    <interactant intactId="EBI-2341576">
        <id>P35226</id>
    </interactant>
    <interactant intactId="EBI-310886">
        <id>Q9P202</id>
        <label>WHRN</label>
    </interactant>
    <organismsDiffer>false</organismsDiffer>
    <experiments>3</experiments>
</comment>
<comment type="subcellular location">
    <subcellularLocation>
        <location evidence="11 19">Nucleus</location>
    </subcellularLocation>
    <subcellularLocation>
        <location evidence="11">Cytoplasm</location>
    </subcellularLocation>
</comment>
<comment type="induction">
    <text evidence="2">Down-regulated by oxidative stress.</text>
</comment>
<comment type="PTM">
    <text evidence="1 8">Monoubiquitinated (By similarity). May be polyubiquitinated; which does not lead to proteasomal degradation.</text>
</comment>
<comment type="miscellaneous">
    <text>The hPRC-H complex purification reported by PubMed:12167701 probably presents a mixture of different PRC1-like complexes.</text>
</comment>
<comment type="online information" name="Atlas of Genetics and Cytogenetics in Oncology and Haematology">
    <link uri="https://atlasgeneticsoncology.org/gene/807/BMI1"/>
</comment>
<organism>
    <name type="scientific">Homo sapiens</name>
    <name type="common">Human</name>
    <dbReference type="NCBI Taxonomy" id="9606"/>
    <lineage>
        <taxon>Eukaryota</taxon>
        <taxon>Metazoa</taxon>
        <taxon>Chordata</taxon>
        <taxon>Craniata</taxon>
        <taxon>Vertebrata</taxon>
        <taxon>Euteleostomi</taxon>
        <taxon>Mammalia</taxon>
        <taxon>Eutheria</taxon>
        <taxon>Euarchontoglires</taxon>
        <taxon>Primates</taxon>
        <taxon>Haplorrhini</taxon>
        <taxon>Catarrhini</taxon>
        <taxon>Hominidae</taxon>
        <taxon>Homo</taxon>
    </lineage>
</organism>
<protein>
    <recommendedName>
        <fullName>Polycomb complex protein BMI-1</fullName>
    </recommendedName>
    <alternativeName>
        <fullName>Polycomb group RING finger protein 4</fullName>
    </alternativeName>
    <alternativeName>
        <fullName>RING finger protein 51</fullName>
    </alternativeName>
</protein>
<feature type="chain" id="PRO_0000055987" description="Polycomb complex protein BMI-1">
    <location>
        <begin position="1"/>
        <end position="326"/>
    </location>
</feature>
<feature type="zinc finger region" description="RING-type" evidence="4">
    <location>
        <begin position="18"/>
        <end position="57"/>
    </location>
</feature>
<feature type="region of interest" description="Interaction with PHC2" evidence="17">
    <location>
        <begin position="162"/>
        <end position="182"/>
    </location>
</feature>
<feature type="region of interest" description="Interaction with E4F1" evidence="11">
    <location>
        <begin position="164"/>
        <end position="228"/>
    </location>
</feature>
<feature type="region of interest" description="Disordered" evidence="5">
    <location>
        <begin position="236"/>
        <end position="326"/>
    </location>
</feature>
<feature type="short sequence motif" description="Nuclear localization signal" evidence="3">
    <location>
        <begin position="81"/>
        <end position="95"/>
    </location>
</feature>
<feature type="compositionally biased region" description="Low complexity" evidence="5">
    <location>
        <begin position="266"/>
        <end position="278"/>
    </location>
</feature>
<feature type="compositionally biased region" description="Polar residues" evidence="5">
    <location>
        <begin position="279"/>
        <end position="309"/>
    </location>
</feature>
<feature type="compositionally biased region" description="Low complexity" evidence="5">
    <location>
        <begin position="315"/>
        <end position="326"/>
    </location>
</feature>
<feature type="sequence variant" id="VAR_052087" description="In dbSNP:rs1042059.">
    <original>C</original>
    <variation>Y</variation>
    <location>
        <position position="18"/>
    </location>
</feature>
<feature type="mutagenesis site" description="Strongly decreases histone H2A ubiquitination; when associated with A-64." evidence="14">
    <original>K</original>
    <variation>A</variation>
    <location>
        <position position="62"/>
    </location>
</feature>
<feature type="mutagenesis site" description="Mildly decreases histone H2A ubiquitination. Strongly decreases histone H2A ubiquitination; when associated with A-62." evidence="14 15">
    <original>R</original>
    <variation>A</variation>
    <location>
        <position position="64"/>
    </location>
</feature>
<feature type="mutagenesis site" description="Increases stimulation of RNF2 ubiquitin ligase activity; when associated with E-77." evidence="16">
    <original>K</original>
    <variation>N</variation>
    <location>
        <position position="73"/>
    </location>
</feature>
<feature type="mutagenesis site" description="Increases stimulation of RNF2 ubiquitin ligase activity; when associated with N-73." evidence="16">
    <original>D</original>
    <variation>E</variation>
    <location>
        <position position="77"/>
    </location>
</feature>
<feature type="mutagenesis site" description="Decreases affinity for PHC2. Abolishes interaction with PHC2; when associated with E-174." evidence="17">
    <original>R</original>
    <variation>E</variation>
    <location>
        <position position="165"/>
    </location>
</feature>
<feature type="mutagenesis site" description="Strongly decreases affinity for PHC2." evidence="17">
    <original>M</original>
    <variation>E</variation>
    <location>
        <position position="170"/>
    </location>
</feature>
<feature type="mutagenesis site" description="Strongly decreases affinity for PHC2. Abolishes interaction with PHC2; when associated with E-165." evidence="17">
    <original>H</original>
    <variation>E</variation>
    <location>
        <position position="174"/>
    </location>
</feature>
<feature type="sequence conflict" description="In Ref. 6; AAB27059." evidence="20" ref="6">
    <original>G</original>
    <variation>S</variation>
    <location>
        <position position="109"/>
    </location>
</feature>
<feature type="sequence conflict" description="In Ref. 1; AAA19873." evidence="20" ref="1">
    <original>I</original>
    <variation>V</variation>
    <location>
        <position position="265"/>
    </location>
</feature>
<feature type="strand" evidence="27">
    <location>
        <begin position="5"/>
        <end position="8"/>
    </location>
</feature>
<feature type="helix" evidence="27">
    <location>
        <begin position="9"/>
        <end position="12"/>
    </location>
</feature>
<feature type="helix" evidence="27">
    <location>
        <begin position="13"/>
        <end position="15"/>
    </location>
</feature>
<feature type="turn" evidence="27">
    <location>
        <begin position="19"/>
        <end position="21"/>
    </location>
</feature>
<feature type="strand" evidence="27">
    <location>
        <begin position="22"/>
        <end position="24"/>
    </location>
</feature>
<feature type="strand" evidence="27">
    <location>
        <begin position="26"/>
        <end position="31"/>
    </location>
</feature>
<feature type="turn" evidence="27">
    <location>
        <begin position="32"/>
        <end position="35"/>
    </location>
</feature>
<feature type="strand" evidence="27">
    <location>
        <begin position="36"/>
        <end position="39"/>
    </location>
</feature>
<feature type="helix" evidence="27">
    <location>
        <begin position="40"/>
        <end position="46"/>
    </location>
</feature>
<feature type="turn" evidence="27">
    <location>
        <begin position="47"/>
        <end position="49"/>
    </location>
</feature>
<feature type="turn" evidence="27">
    <location>
        <begin position="54"/>
        <end position="56"/>
    </location>
</feature>
<feature type="helix" evidence="27">
    <location>
        <begin position="65"/>
        <end position="68"/>
    </location>
</feature>
<feature type="strand" evidence="27">
    <location>
        <begin position="69"/>
        <end position="71"/>
    </location>
</feature>
<feature type="helix" evidence="27">
    <location>
        <begin position="73"/>
        <end position="82"/>
    </location>
</feature>
<feature type="strand" evidence="28">
    <location>
        <begin position="83"/>
        <end position="85"/>
    </location>
</feature>
<feature type="helix" evidence="27">
    <location>
        <begin position="86"/>
        <end position="100"/>
    </location>
</feature>
<feature type="strand" evidence="26">
    <location>
        <begin position="130"/>
        <end position="137"/>
    </location>
</feature>
<feature type="helix" evidence="25">
    <location>
        <begin position="140"/>
        <end position="142"/>
    </location>
</feature>
<feature type="helix" evidence="25">
    <location>
        <begin position="147"/>
        <end position="150"/>
    </location>
</feature>
<feature type="strand" evidence="26">
    <location>
        <begin position="162"/>
        <end position="167"/>
    </location>
</feature>
<feature type="helix" evidence="26">
    <location>
        <begin position="172"/>
        <end position="182"/>
    </location>
</feature>
<feature type="strand" evidence="26">
    <location>
        <begin position="189"/>
        <end position="199"/>
    </location>
</feature>
<feature type="helix" evidence="26">
    <location>
        <begin position="206"/>
        <end position="213"/>
    </location>
</feature>
<feature type="strand" evidence="26">
    <location>
        <begin position="217"/>
        <end position="229"/>
    </location>
</feature>
<dbReference type="EMBL" id="L13689">
    <property type="protein sequence ID" value="AAA19873.1"/>
    <property type="molecule type" value="mRNA"/>
</dbReference>
<dbReference type="EMBL" id="AK313235">
    <property type="protein sequence ID" value="BAG36046.1"/>
    <property type="molecule type" value="mRNA"/>
</dbReference>
<dbReference type="EMBL" id="AL158211">
    <property type="status" value="NOT_ANNOTATED_CDS"/>
    <property type="molecule type" value="Genomic_DNA"/>
</dbReference>
<dbReference type="EMBL" id="CH471072">
    <property type="protein sequence ID" value="EAW86148.1"/>
    <property type="molecule type" value="Genomic_DNA"/>
</dbReference>
<dbReference type="EMBL" id="CH471072">
    <property type="protein sequence ID" value="EAW86150.1"/>
    <property type="molecule type" value="Genomic_DNA"/>
</dbReference>
<dbReference type="EMBL" id="CH471072">
    <property type="protein sequence ID" value="EAW86151.1"/>
    <property type="molecule type" value="Genomic_DNA"/>
</dbReference>
<dbReference type="EMBL" id="CH471072">
    <property type="protein sequence ID" value="EAW86154.1"/>
    <property type="molecule type" value="Genomic_DNA"/>
</dbReference>
<dbReference type="EMBL" id="BC011652">
    <property type="protein sequence ID" value="AAH11652.1"/>
    <property type="molecule type" value="mRNA"/>
</dbReference>
<dbReference type="EMBL" id="AH004292">
    <property type="protein sequence ID" value="AAB27059.1"/>
    <property type="molecule type" value="mRNA"/>
</dbReference>
<dbReference type="CCDS" id="CCDS7138.1"/>
<dbReference type="PIR" id="I54339">
    <property type="entry name" value="I54339"/>
</dbReference>
<dbReference type="RefSeq" id="NP_001190991.1">
    <property type="nucleotide sequence ID" value="NM_001204062.1"/>
</dbReference>
<dbReference type="RefSeq" id="NP_001415238.1">
    <property type="nucleotide sequence ID" value="NM_001428309.1"/>
</dbReference>
<dbReference type="RefSeq" id="NP_001415239.1">
    <property type="nucleotide sequence ID" value="NM_001428310.1"/>
</dbReference>
<dbReference type="RefSeq" id="NP_001415240.1">
    <property type="nucleotide sequence ID" value="NM_001428311.1"/>
</dbReference>
<dbReference type="RefSeq" id="NP_001415241.1">
    <property type="nucleotide sequence ID" value="NM_001428312.1"/>
</dbReference>
<dbReference type="RefSeq" id="NP_005171.4">
    <property type="nucleotide sequence ID" value="NM_005180.8"/>
</dbReference>
<dbReference type="PDB" id="2H0D">
    <property type="method" value="X-ray"/>
    <property type="resolution" value="2.50 A"/>
    <property type="chains" value="A=5-101"/>
</dbReference>
<dbReference type="PDB" id="2NA1">
    <property type="method" value="NMR"/>
    <property type="chains" value="A=121-235"/>
</dbReference>
<dbReference type="PDB" id="3RPG">
    <property type="method" value="X-ray"/>
    <property type="resolution" value="2.65 A"/>
    <property type="chains" value="B=1-109"/>
</dbReference>
<dbReference type="PDB" id="4R8P">
    <property type="method" value="X-ray"/>
    <property type="resolution" value="3.28 A"/>
    <property type="chains" value="K/M=2-109"/>
</dbReference>
<dbReference type="PDB" id="5FR6">
    <property type="method" value="X-ray"/>
    <property type="resolution" value="2.51 A"/>
    <property type="chains" value="A=121-235"/>
</dbReference>
<dbReference type="PDB" id="6WI7">
    <property type="method" value="X-ray"/>
    <property type="resolution" value="1.70 A"/>
    <property type="chains" value="A=1-104"/>
</dbReference>
<dbReference type="PDB" id="6WI8">
    <property type="method" value="X-ray"/>
    <property type="resolution" value="3.09 A"/>
    <property type="chains" value="A/B=1-104"/>
</dbReference>
<dbReference type="PDB" id="7ND1">
    <property type="method" value="NMR"/>
    <property type="chains" value="H=4-104"/>
</dbReference>
<dbReference type="PDB" id="8GRM">
    <property type="method" value="EM"/>
    <property type="resolution" value="3.05 A"/>
    <property type="chains" value="M=2-102"/>
</dbReference>
<dbReference type="PDB" id="8PP7">
    <property type="method" value="EM"/>
    <property type="resolution" value="2.91 A"/>
    <property type="chains" value="K/M=1-326"/>
</dbReference>
<dbReference type="PDB" id="9DBY">
    <property type="method" value="EM"/>
    <property type="resolution" value="2.80 A"/>
    <property type="chains" value="K=1-326"/>
</dbReference>
<dbReference type="PDB" id="9DDE">
    <property type="method" value="EM"/>
    <property type="resolution" value="3.20 A"/>
    <property type="chains" value="K=1-326"/>
</dbReference>
<dbReference type="PDB" id="9DGG">
    <property type="method" value="EM"/>
    <property type="resolution" value="2.98 A"/>
    <property type="chains" value="K=1-326"/>
</dbReference>
<dbReference type="PDBsum" id="2H0D"/>
<dbReference type="PDBsum" id="2NA1"/>
<dbReference type="PDBsum" id="3RPG"/>
<dbReference type="PDBsum" id="4R8P"/>
<dbReference type="PDBsum" id="5FR6"/>
<dbReference type="PDBsum" id="6WI7"/>
<dbReference type="PDBsum" id="6WI8"/>
<dbReference type="PDBsum" id="7ND1"/>
<dbReference type="PDBsum" id="8GRM"/>
<dbReference type="PDBsum" id="8PP7"/>
<dbReference type="PDBsum" id="9DBY"/>
<dbReference type="PDBsum" id="9DDE"/>
<dbReference type="PDBsum" id="9DGG"/>
<dbReference type="EMDB" id="EMD-17797"/>
<dbReference type="EMDB" id="EMD-46728"/>
<dbReference type="EMDB" id="EMD-46771"/>
<dbReference type="EMDB" id="EMD-46823"/>
<dbReference type="SMR" id="P35226"/>
<dbReference type="BioGRID" id="107116">
    <property type="interactions" value="670"/>
</dbReference>
<dbReference type="BioGRID" id="1529410">
    <property type="interactions" value="30"/>
</dbReference>
<dbReference type="ComplexPortal" id="CPX-2273">
    <property type="entry name" value="Non-canonical polycomb repressive complex 1.4, RING1-RYBP variant"/>
</dbReference>
<dbReference type="ComplexPortal" id="CPX-2274">
    <property type="entry name" value="Non-canonical polycomb repressive complex 1.4, RING1-YAF2 variant"/>
</dbReference>
<dbReference type="ComplexPortal" id="CPX-2282">
    <property type="entry name" value="Non-canonical polycomb repressive complex 1.4, RNF2-YAF2 variant"/>
</dbReference>
<dbReference type="ComplexPortal" id="CPX-2571">
    <property type="entry name" value="Non-canonical polycomb repressive complex 1.4, RNF2-RYBP variant"/>
</dbReference>
<dbReference type="ComplexPortal" id="CPX-7501">
    <property type="entry name" value="Polycomb repressive complex 1, RING1-PCGF4-CBX2-PHC1 variant"/>
</dbReference>
<dbReference type="ComplexPortal" id="CPX-7502">
    <property type="entry name" value="Polycomb repressive complex 1, RING1-PCGF4-CBX2-PHC2 variant"/>
</dbReference>
<dbReference type="ComplexPortal" id="CPX-7504">
    <property type="entry name" value="Polycomb repressive complex 1, RING1-PCGF4-CBX2-PHC3 variant"/>
</dbReference>
<dbReference type="ComplexPortal" id="CPX-7505">
    <property type="entry name" value="Polycomb repressive complex 1, RING1-PCGF4-CBX4-PHC1 variant"/>
</dbReference>
<dbReference type="ComplexPortal" id="CPX-7506">
    <property type="entry name" value="Polycomb repressive complex 1, RING1-PCGF4-CBX4-PHC2 variant"/>
</dbReference>
<dbReference type="ComplexPortal" id="CPX-7508">
    <property type="entry name" value="Polycomb repressive complex 1, RING1-PCGF4-CBX4-PHC3 variant"/>
</dbReference>
<dbReference type="ComplexPortal" id="CPX-7509">
    <property type="entry name" value="Polycomb repressive complex 1, RING1-PCGF4-CBX6-PHC1 variant"/>
</dbReference>
<dbReference type="ComplexPortal" id="CPX-7510">
    <property type="entry name" value="Polycomb repressive complex 1, RING1-PCGF4-CBX6-PHC2 variant"/>
</dbReference>
<dbReference type="ComplexPortal" id="CPX-7511">
    <property type="entry name" value="Polycomb repressive complex 1, RING1-PCGF4-CBX6-PHC3 variant"/>
</dbReference>
<dbReference type="ComplexPortal" id="CPX-7513">
    <property type="entry name" value="Polycomb repressive complex 1, RING1-PCGF4-CBX7-PHC1 variant"/>
</dbReference>
<dbReference type="ComplexPortal" id="CPX-7514">
    <property type="entry name" value="Polycomb repressive complex 1, RING1-PCGF4-CBX7-PHC2 variant"/>
</dbReference>
<dbReference type="ComplexPortal" id="CPX-7515">
    <property type="entry name" value="Polycomb repressive complex 1, RING1-PCGF4-CBX7-PHC3 variant"/>
</dbReference>
<dbReference type="ComplexPortal" id="CPX-7516">
    <property type="entry name" value="Polycomb repressive complex 1, RING1-PCGF4-CBX8-PHC1 variant"/>
</dbReference>
<dbReference type="ComplexPortal" id="CPX-7517">
    <property type="entry name" value="Polycomb repressive complex 1, RING1-PCGF4-CBX8-PHC2 variant"/>
</dbReference>
<dbReference type="ComplexPortal" id="CPX-7518">
    <property type="entry name" value="Polycomb repressive complex 1, RING1-PCGF4-CBX8-PHC3 variant"/>
</dbReference>
<dbReference type="ComplexPortal" id="CPX-7541">
    <property type="entry name" value="Polycomb repressive complex 1, RING2-PCGF4-CBX2-PHC1 variant"/>
</dbReference>
<dbReference type="ComplexPortal" id="CPX-7542">
    <property type="entry name" value="Polycomb repressive complex 1, RING2-PCGF4-CBX2-PHC2 variant"/>
</dbReference>
<dbReference type="ComplexPortal" id="CPX-7544">
    <property type="entry name" value="Polycomb repressive complex 1, RING2-PCGF4-CBX2-PHC3 variant"/>
</dbReference>
<dbReference type="ComplexPortal" id="CPX-7545">
    <property type="entry name" value="Polycomb repressive complex 1, RING2-PCGF4-CBX4-PHC1 variant"/>
</dbReference>
<dbReference type="ComplexPortal" id="CPX-7546">
    <property type="entry name" value="Polycomb repressive complex 1, RING2-PCGF4-CBX4-PHC2 variant"/>
</dbReference>
<dbReference type="ComplexPortal" id="CPX-7547">
    <property type="entry name" value="Polycomb repressive complex 1, RING2-PCGF4-CBX4-PHC3 variant"/>
</dbReference>
<dbReference type="ComplexPortal" id="CPX-7548">
    <property type="entry name" value="Polycomb repressive complex 1, RING2-PCGF4-CBX6-PHC1 variant"/>
</dbReference>
<dbReference type="ComplexPortal" id="CPX-7549">
    <property type="entry name" value="Polycomb repressive complex 1, RING2-PCGF4-CBX6-PHC2 variant"/>
</dbReference>
<dbReference type="ComplexPortal" id="CPX-7550">
    <property type="entry name" value="Polycomb repressive complex 1, RING2-PCGF4-CBX6-PHC3 variant"/>
</dbReference>
<dbReference type="ComplexPortal" id="CPX-7551">
    <property type="entry name" value="Polycomb repressive complex 1, RING2-PCGF4-CBX7-PHC1 variant"/>
</dbReference>
<dbReference type="ComplexPortal" id="CPX-7552">
    <property type="entry name" value="Polycomb repressive complex 1, RING2-PCGF4-CBX7-PHC2 variant"/>
</dbReference>
<dbReference type="ComplexPortal" id="CPX-7553">
    <property type="entry name" value="Polycomb repressive complex 1, RING2-PCGF4-CBX7-PHC3 variant"/>
</dbReference>
<dbReference type="ComplexPortal" id="CPX-7554">
    <property type="entry name" value="Polycomb repressive complex 1, RING2-PCGF4-CBX8-PHC1 variant"/>
</dbReference>
<dbReference type="ComplexPortal" id="CPX-7555">
    <property type="entry name" value="Polycomb repressive complex 1, RING2-PCGF4-CBX8-PHC2 variant"/>
</dbReference>
<dbReference type="ComplexPortal" id="CPX-7556">
    <property type="entry name" value="Polycomb repressive complex 1, RING2-PCGF4-CBX8-PHC3 variant"/>
</dbReference>
<dbReference type="CORUM" id="P35226"/>
<dbReference type="DIP" id="DIP-41879N"/>
<dbReference type="FunCoup" id="P35226">
    <property type="interactions" value="2936"/>
</dbReference>
<dbReference type="IntAct" id="P35226">
    <property type="interactions" value="973"/>
</dbReference>
<dbReference type="MINT" id="P35226"/>
<dbReference type="STRING" id="9606.ENSP00000365851"/>
<dbReference type="BindingDB" id="P35226"/>
<dbReference type="ChEMBL" id="CHEMBL4295749"/>
<dbReference type="DrugBank" id="DB18080">
    <property type="generic name" value="Unesbulin"/>
</dbReference>
<dbReference type="GlyCosmos" id="P35226">
    <property type="glycosylation" value="1 site, 1 glycan"/>
</dbReference>
<dbReference type="GlyGen" id="P35226">
    <property type="glycosylation" value="2 sites, 1 O-linked glycan (1 site)"/>
</dbReference>
<dbReference type="iPTMnet" id="P35226"/>
<dbReference type="PhosphoSitePlus" id="P35226"/>
<dbReference type="BioMuta" id="BMI1"/>
<dbReference type="DMDM" id="22258801"/>
<dbReference type="jPOST" id="P35226"/>
<dbReference type="MassIVE" id="P35226"/>
<dbReference type="PaxDb" id="9606-ENSP00000365851"/>
<dbReference type="PeptideAtlas" id="P35226"/>
<dbReference type="ProteomicsDB" id="54991"/>
<dbReference type="Pumba" id="P35226"/>
<dbReference type="Antibodypedia" id="4554">
    <property type="antibodies" value="970 antibodies from 47 providers"/>
</dbReference>
<dbReference type="DNASU" id="648"/>
<dbReference type="Ensembl" id="ENST00000376663.8">
    <property type="protein sequence ID" value="ENSP00000365851.3"/>
    <property type="gene ID" value="ENSG00000168283.14"/>
</dbReference>
<dbReference type="GeneID" id="100532731"/>
<dbReference type="GeneID" id="648"/>
<dbReference type="KEGG" id="hsa:100532731"/>
<dbReference type="KEGG" id="hsa:648"/>
<dbReference type="MANE-Select" id="ENST00000376663.8">
    <property type="protein sequence ID" value="ENSP00000365851.3"/>
    <property type="RefSeq nucleotide sequence ID" value="NM_005180.9"/>
    <property type="RefSeq protein sequence ID" value="NP_005171.4"/>
</dbReference>
<dbReference type="UCSC" id="uc001irh.4">
    <property type="organism name" value="human"/>
</dbReference>
<dbReference type="AGR" id="HGNC:1066"/>
<dbReference type="AGR" id="HGNC:48326"/>
<dbReference type="CTD" id="100532731"/>
<dbReference type="CTD" id="648"/>
<dbReference type="DisGeNET" id="100532731"/>
<dbReference type="DisGeNET" id="648"/>
<dbReference type="GeneCards" id="BMI1"/>
<dbReference type="HGNC" id="HGNC:1066">
    <property type="gene designation" value="BMI1"/>
</dbReference>
<dbReference type="HPA" id="ENSG00000168283">
    <property type="expression patterns" value="Low tissue specificity"/>
</dbReference>
<dbReference type="MIM" id="164831">
    <property type="type" value="gene"/>
</dbReference>
<dbReference type="neXtProt" id="NX_P35226"/>
<dbReference type="OpenTargets" id="ENSG00000168283"/>
<dbReference type="PharmGKB" id="PA25376"/>
<dbReference type="VEuPathDB" id="HostDB:ENSG00000168283"/>
<dbReference type="eggNOG" id="KOG2660">
    <property type="taxonomic scope" value="Eukaryota"/>
</dbReference>
<dbReference type="GeneTree" id="ENSGT00940000156042"/>
<dbReference type="HOGENOM" id="CLU_046427_0_0_1"/>
<dbReference type="InParanoid" id="P35226"/>
<dbReference type="OMA" id="QANDKRY"/>
<dbReference type="OrthoDB" id="1305878at2759"/>
<dbReference type="PAN-GO" id="P35226">
    <property type="GO annotations" value="4 GO annotations based on evolutionary models"/>
</dbReference>
<dbReference type="PhylomeDB" id="P35226"/>
<dbReference type="TreeFam" id="TF324206"/>
<dbReference type="PathwayCommons" id="P35226"/>
<dbReference type="Reactome" id="R-HSA-2559580">
    <property type="pathway name" value="Oxidative Stress Induced Senescence"/>
</dbReference>
<dbReference type="Reactome" id="R-HSA-3108214">
    <property type="pathway name" value="SUMOylation of DNA damage response and repair proteins"/>
</dbReference>
<dbReference type="Reactome" id="R-HSA-3899300">
    <property type="pathway name" value="SUMOylation of transcription cofactors"/>
</dbReference>
<dbReference type="Reactome" id="R-HSA-4551638">
    <property type="pathway name" value="SUMOylation of chromatin organization proteins"/>
</dbReference>
<dbReference type="Reactome" id="R-HSA-4570464">
    <property type="pathway name" value="SUMOylation of RNA binding proteins"/>
</dbReference>
<dbReference type="Reactome" id="R-HSA-4655427">
    <property type="pathway name" value="SUMOylation of DNA methylation proteins"/>
</dbReference>
<dbReference type="Reactome" id="R-HSA-8939243">
    <property type="pathway name" value="RUNX1 interacts with co-factors whose precise effect on RUNX1 targets is not known"/>
</dbReference>
<dbReference type="Reactome" id="R-HSA-8943724">
    <property type="pathway name" value="Regulation of PTEN gene transcription"/>
</dbReference>
<dbReference type="Reactome" id="R-HSA-8953750">
    <property type="pathway name" value="Transcriptional Regulation by E2F6"/>
</dbReference>
<dbReference type="SignaLink" id="P35226"/>
<dbReference type="SIGNOR" id="P35226"/>
<dbReference type="BioGRID-ORCS" id="100532731">
    <property type="hits" value="19 hits in 660 CRISPR screens"/>
</dbReference>
<dbReference type="BioGRID-ORCS" id="648">
    <property type="hits" value="45 hits in 1205 CRISPR screens"/>
</dbReference>
<dbReference type="EvolutionaryTrace" id="P35226"/>
<dbReference type="GeneWiki" id="BMI1"/>
<dbReference type="Pharos" id="P35226">
    <property type="development level" value="Tbio"/>
</dbReference>
<dbReference type="PRO" id="PR:P35226"/>
<dbReference type="Proteomes" id="UP000005640">
    <property type="component" value="Chromosome 10"/>
</dbReference>
<dbReference type="RNAct" id="P35226">
    <property type="molecule type" value="protein"/>
</dbReference>
<dbReference type="Bgee" id="ENSG00000168283">
    <property type="expression patterns" value="Expressed in germinal epithelium of ovary and 211 other cell types or tissues"/>
</dbReference>
<dbReference type="ExpressionAtlas" id="P35226">
    <property type="expression patterns" value="baseline and differential"/>
</dbReference>
<dbReference type="GO" id="GO:0005829">
    <property type="term" value="C:cytosol"/>
    <property type="evidence" value="ECO:0000314"/>
    <property type="project" value="HPA"/>
</dbReference>
<dbReference type="GO" id="GO:0000792">
    <property type="term" value="C:heterochromatin"/>
    <property type="evidence" value="ECO:0007669"/>
    <property type="project" value="Ensembl"/>
</dbReference>
<dbReference type="GO" id="GO:0016604">
    <property type="term" value="C:nuclear body"/>
    <property type="evidence" value="ECO:0000314"/>
    <property type="project" value="HPA"/>
</dbReference>
<dbReference type="GO" id="GO:0005654">
    <property type="term" value="C:nucleoplasm"/>
    <property type="evidence" value="ECO:0000304"/>
    <property type="project" value="Reactome"/>
</dbReference>
<dbReference type="GO" id="GO:0005634">
    <property type="term" value="C:nucleus"/>
    <property type="evidence" value="ECO:0000314"/>
    <property type="project" value="UniProtKB"/>
</dbReference>
<dbReference type="GO" id="GO:0031519">
    <property type="term" value="C:PcG protein complex"/>
    <property type="evidence" value="ECO:0000314"/>
    <property type="project" value="UniProtKB"/>
</dbReference>
<dbReference type="GO" id="GO:0035102">
    <property type="term" value="C:PRC1 complex"/>
    <property type="evidence" value="ECO:0000314"/>
    <property type="project" value="UniProtKB"/>
</dbReference>
<dbReference type="GO" id="GO:0000151">
    <property type="term" value="C:ubiquitin ligase complex"/>
    <property type="evidence" value="ECO:0000314"/>
    <property type="project" value="UniProtKB"/>
</dbReference>
<dbReference type="GO" id="GO:1990841">
    <property type="term" value="F:promoter-specific chromatin binding"/>
    <property type="evidence" value="ECO:0000314"/>
    <property type="project" value="UniProtKB"/>
</dbReference>
<dbReference type="GO" id="GO:0071535">
    <property type="term" value="F:RING-like zinc finger domain binding"/>
    <property type="evidence" value="ECO:0000353"/>
    <property type="project" value="UniProtKB"/>
</dbReference>
<dbReference type="GO" id="GO:0097027">
    <property type="term" value="F:ubiquitin-protein transferase activator activity"/>
    <property type="evidence" value="ECO:0007669"/>
    <property type="project" value="Ensembl"/>
</dbReference>
<dbReference type="GO" id="GO:0008270">
    <property type="term" value="F:zinc ion binding"/>
    <property type="evidence" value="ECO:0000314"/>
    <property type="project" value="UniProtKB"/>
</dbReference>
<dbReference type="GO" id="GO:0097190">
    <property type="term" value="P:apoptotic signaling pathway"/>
    <property type="evidence" value="ECO:0007669"/>
    <property type="project" value="Ensembl"/>
</dbReference>
<dbReference type="GO" id="GO:0007420">
    <property type="term" value="P:brain development"/>
    <property type="evidence" value="ECO:0007669"/>
    <property type="project" value="Ensembl"/>
</dbReference>
<dbReference type="GO" id="GO:0071549">
    <property type="term" value="P:cellular response to dexamethasone stimulus"/>
    <property type="evidence" value="ECO:0007669"/>
    <property type="project" value="Ensembl"/>
</dbReference>
<dbReference type="GO" id="GO:0071347">
    <property type="term" value="P:cellular response to interleukin-1"/>
    <property type="evidence" value="ECO:0007669"/>
    <property type="project" value="Ensembl"/>
</dbReference>
<dbReference type="GO" id="GO:0006338">
    <property type="term" value="P:chromatin remodeling"/>
    <property type="evidence" value="ECO:0000315"/>
    <property type="project" value="UniProtKB"/>
</dbReference>
<dbReference type="GO" id="GO:0006346">
    <property type="term" value="P:DNA methylation-dependent constitutive heterochromatin formation"/>
    <property type="evidence" value="ECO:0007669"/>
    <property type="project" value="Ensembl"/>
</dbReference>
<dbReference type="GO" id="GO:0048704">
    <property type="term" value="P:embryonic skeletal system morphogenesis"/>
    <property type="evidence" value="ECO:0007669"/>
    <property type="project" value="Ensembl"/>
</dbReference>
<dbReference type="GO" id="GO:0030097">
    <property type="term" value="P:hemopoiesis"/>
    <property type="evidence" value="ECO:0000270"/>
    <property type="project" value="UniProtKB"/>
</dbReference>
<dbReference type="GO" id="GO:0006959">
    <property type="term" value="P:humoral immune response"/>
    <property type="evidence" value="ECO:0007669"/>
    <property type="project" value="Ensembl"/>
</dbReference>
<dbReference type="GO" id="GO:0001701">
    <property type="term" value="P:in utero embryonic development"/>
    <property type="evidence" value="ECO:0007669"/>
    <property type="project" value="Ensembl"/>
</dbReference>
<dbReference type="GO" id="GO:2001234">
    <property type="term" value="P:negative regulation of apoptotic signaling pathway"/>
    <property type="evidence" value="ECO:0007669"/>
    <property type="project" value="Ensembl"/>
</dbReference>
<dbReference type="GO" id="GO:0045814">
    <property type="term" value="P:negative regulation of gene expression, epigenetic"/>
    <property type="evidence" value="ECO:0000315"/>
    <property type="project" value="UniProtKB"/>
</dbReference>
<dbReference type="GO" id="GO:0000122">
    <property type="term" value="P:negative regulation of transcription by RNA polymerase II"/>
    <property type="evidence" value="ECO:0000315"/>
    <property type="project" value="UniProtKB"/>
</dbReference>
<dbReference type="GO" id="GO:0030890">
    <property type="term" value="P:positive regulation of B cell proliferation"/>
    <property type="evidence" value="ECO:0007669"/>
    <property type="project" value="Ensembl"/>
</dbReference>
<dbReference type="GO" id="GO:0048146">
    <property type="term" value="P:positive regulation of fibroblast proliferation"/>
    <property type="evidence" value="ECO:0000315"/>
    <property type="project" value="BHF-UCL"/>
</dbReference>
<dbReference type="GO" id="GO:0033092">
    <property type="term" value="P:positive regulation of immature T cell proliferation in thymus"/>
    <property type="evidence" value="ECO:0007669"/>
    <property type="project" value="Ensembl"/>
</dbReference>
<dbReference type="GO" id="GO:0051443">
    <property type="term" value="P:positive regulation of ubiquitin-protein transferase activity"/>
    <property type="evidence" value="ECO:0000314"/>
    <property type="project" value="UniProtKB"/>
</dbReference>
<dbReference type="GO" id="GO:2000011">
    <property type="term" value="P:regulation of adaxial/abaxial pattern formation"/>
    <property type="evidence" value="ECO:0007669"/>
    <property type="project" value="Ensembl"/>
</dbReference>
<dbReference type="GO" id="GO:0010468">
    <property type="term" value="P:regulation of gene expression"/>
    <property type="evidence" value="ECO:0000315"/>
    <property type="project" value="BHF-UCL"/>
</dbReference>
<dbReference type="GO" id="GO:0090183">
    <property type="term" value="P:regulation of kidney development"/>
    <property type="evidence" value="ECO:0007669"/>
    <property type="project" value="Ensembl"/>
</dbReference>
<dbReference type="GO" id="GO:0021903">
    <property type="term" value="P:rostrocaudal neural tube patterning"/>
    <property type="evidence" value="ECO:0007669"/>
    <property type="project" value="Ensembl"/>
</dbReference>
<dbReference type="GO" id="GO:0007379">
    <property type="term" value="P:segment specification"/>
    <property type="evidence" value="ECO:0000304"/>
    <property type="project" value="ProtInc"/>
</dbReference>
<dbReference type="GO" id="GO:0048103">
    <property type="term" value="P:somatic stem cell division"/>
    <property type="evidence" value="ECO:0007669"/>
    <property type="project" value="Ensembl"/>
</dbReference>
<dbReference type="CDD" id="cd17165">
    <property type="entry name" value="RAWUL_PCGF4"/>
    <property type="match status" value="1"/>
</dbReference>
<dbReference type="CDD" id="cd16736">
    <property type="entry name" value="RING-HC_PCGF4"/>
    <property type="match status" value="1"/>
</dbReference>
<dbReference type="FunFam" id="3.10.20.90:FF:000106">
    <property type="entry name" value="Polycomb complex protein BMI-1"/>
    <property type="match status" value="1"/>
</dbReference>
<dbReference type="FunFam" id="3.30.40.10:FF:000082">
    <property type="entry name" value="Polycomb group ring finger 2"/>
    <property type="match status" value="1"/>
</dbReference>
<dbReference type="Gene3D" id="3.10.20.90">
    <property type="entry name" value="Phosphatidylinositol 3-kinase Catalytic Subunit, Chain A, domain 1"/>
    <property type="match status" value="1"/>
</dbReference>
<dbReference type="Gene3D" id="3.30.40.10">
    <property type="entry name" value="Zinc/RING finger domain, C3HC4 (zinc finger)"/>
    <property type="match status" value="1"/>
</dbReference>
<dbReference type="IDEAL" id="IID00450"/>
<dbReference type="InterPro" id="IPR032443">
    <property type="entry name" value="RAWUL"/>
</dbReference>
<dbReference type="InterPro" id="IPR001841">
    <property type="entry name" value="Znf_RING"/>
</dbReference>
<dbReference type="InterPro" id="IPR013083">
    <property type="entry name" value="Znf_RING/FYVE/PHD"/>
</dbReference>
<dbReference type="InterPro" id="IPR017907">
    <property type="entry name" value="Znf_RING_CS"/>
</dbReference>
<dbReference type="PANTHER" id="PTHR10825:SF21">
    <property type="entry name" value="POLYCOMB COMPLEX PROTEIN BMI-1"/>
    <property type="match status" value="1"/>
</dbReference>
<dbReference type="PANTHER" id="PTHR10825">
    <property type="entry name" value="RING FINGER DOMAIN-CONTAINING, POLYCOMB GROUP COMPONENT"/>
    <property type="match status" value="1"/>
</dbReference>
<dbReference type="Pfam" id="PF16207">
    <property type="entry name" value="RAWUL"/>
    <property type="match status" value="1"/>
</dbReference>
<dbReference type="Pfam" id="PF13923">
    <property type="entry name" value="zf-C3HC4_2"/>
    <property type="match status" value="1"/>
</dbReference>
<dbReference type="SMART" id="SM00184">
    <property type="entry name" value="RING"/>
    <property type="match status" value="1"/>
</dbReference>
<dbReference type="SUPFAM" id="SSF57850">
    <property type="entry name" value="RING/U-box"/>
    <property type="match status" value="1"/>
</dbReference>
<dbReference type="PROSITE" id="PS00518">
    <property type="entry name" value="ZF_RING_1"/>
    <property type="match status" value="1"/>
</dbReference>
<dbReference type="PROSITE" id="PS50089">
    <property type="entry name" value="ZF_RING_2"/>
    <property type="match status" value="1"/>
</dbReference>
<evidence type="ECO:0000250" key="1"/>
<evidence type="ECO:0000250" key="2">
    <source>
        <dbReference type="UniProtKB" id="P25916"/>
    </source>
</evidence>
<evidence type="ECO:0000255" key="3"/>
<evidence type="ECO:0000255" key="4">
    <source>
        <dbReference type="PROSITE-ProRule" id="PRU00175"/>
    </source>
</evidence>
<evidence type="ECO:0000256" key="5">
    <source>
        <dbReference type="SAM" id="MobiDB-lite"/>
    </source>
</evidence>
<evidence type="ECO:0000269" key="6">
    <source>
    </source>
</evidence>
<evidence type="ECO:0000269" key="7">
    <source>
    </source>
</evidence>
<evidence type="ECO:0000269" key="8">
    <source>
    </source>
</evidence>
<evidence type="ECO:0000269" key="9">
    <source>
    </source>
</evidence>
<evidence type="ECO:0000269" key="10">
    <source>
    </source>
</evidence>
<evidence type="ECO:0000269" key="11">
    <source>
    </source>
</evidence>
<evidence type="ECO:0000269" key="12">
    <source>
    </source>
</evidence>
<evidence type="ECO:0000269" key="13">
    <source>
    </source>
</evidence>
<evidence type="ECO:0000269" key="14">
    <source>
    </source>
</evidence>
<evidence type="ECO:0000269" key="15">
    <source>
    </source>
</evidence>
<evidence type="ECO:0000269" key="16">
    <source>
    </source>
</evidence>
<evidence type="ECO:0000269" key="17">
    <source>
    </source>
</evidence>
<evidence type="ECO:0000269" key="18">
    <source>
    </source>
</evidence>
<evidence type="ECO:0000269" key="19">
    <source>
    </source>
</evidence>
<evidence type="ECO:0000305" key="20"/>
<evidence type="ECO:0007744" key="21">
    <source>
        <dbReference type="PDB" id="2NA1"/>
    </source>
</evidence>
<evidence type="ECO:0007744" key="22">
    <source>
        <dbReference type="PDB" id="3RPG"/>
    </source>
</evidence>
<evidence type="ECO:0007744" key="23">
    <source>
        <dbReference type="PDB" id="4R8P"/>
    </source>
</evidence>
<evidence type="ECO:0007744" key="24">
    <source>
        <dbReference type="PDB" id="5FR6"/>
    </source>
</evidence>
<evidence type="ECO:0007829" key="25">
    <source>
        <dbReference type="PDB" id="2NA1"/>
    </source>
</evidence>
<evidence type="ECO:0007829" key="26">
    <source>
        <dbReference type="PDB" id="5FR6"/>
    </source>
</evidence>
<evidence type="ECO:0007829" key="27">
    <source>
        <dbReference type="PDB" id="6WI7"/>
    </source>
</evidence>
<evidence type="ECO:0007829" key="28">
    <source>
        <dbReference type="PDB" id="9DBY"/>
    </source>
</evidence>
<proteinExistence type="evidence at protein level"/>
<gene>
    <name type="primary">BMI1</name>
    <name type="synonym">PCGF4</name>
    <name type="synonym">RNF51</name>
</gene>
<name>BMI1_HUMAN</name>
<keyword id="KW-0002">3D-structure</keyword>
<keyword id="KW-0156">Chromatin regulator</keyword>
<keyword id="KW-0963">Cytoplasm</keyword>
<keyword id="KW-0479">Metal-binding</keyword>
<keyword id="KW-0539">Nucleus</keyword>
<keyword id="KW-1267">Proteomics identification</keyword>
<keyword id="KW-0656">Proto-oncogene</keyword>
<keyword id="KW-1185">Reference proteome</keyword>
<keyword id="KW-0678">Repressor</keyword>
<keyword id="KW-0804">Transcription</keyword>
<keyword id="KW-0805">Transcription regulation</keyword>
<keyword id="KW-0832">Ubl conjugation</keyword>
<keyword id="KW-0862">Zinc</keyword>
<keyword id="KW-0863">Zinc-finger</keyword>
<sequence length="326" mass="36949">MHRTTRIKITELNPHLMCVLCGGYFIDATTIIECLHSFCKTCIVRYLETSKYCPICDVQVHKTRPLLNIRSDKTLQDIVYKLVPGLFKNEMKRRRDFYAAHPSADAANGSNEDRGEVADEDKRIITDDEIISLSIEFFDQNRLDRKVNKDKEKSKEEVNDKRYLRCPAAMTVMHLRKFLRSKMDIPNTFQIDVMYEEEPLKDYYTLMDIAYIYTWRRNGPLPLKYRVRPTCKRMKISHQRDGLTNAGELESDSGSDKANSPAGGIPSTSSCLPSPSTPVQSPHPQFPHISSTMNGTSNSPSGNHQSSFANRPRKSSVNGSSATSSG</sequence>
<reference key="1">
    <citation type="journal article" date="1993" name="Hum. Mol. Genet.">
        <title>Characterization and chromosomal localization of the human proto-oncogene BMI-1.</title>
        <authorList>
            <person name="Alkema M.J."/>
            <person name="Wiegand J."/>
            <person name="Raap A.K."/>
            <person name="Berns A."/>
            <person name="van Lohuizen M."/>
        </authorList>
    </citation>
    <scope>NUCLEOTIDE SEQUENCE [MRNA]</scope>
    <source>
        <tissue>Erythrocyte</tissue>
    </source>
</reference>
<reference key="2">
    <citation type="journal article" date="2004" name="Nat. Genet.">
        <title>Complete sequencing and characterization of 21,243 full-length human cDNAs.</title>
        <authorList>
            <person name="Ota T."/>
            <person name="Suzuki Y."/>
            <person name="Nishikawa T."/>
            <person name="Otsuki T."/>
            <person name="Sugiyama T."/>
            <person name="Irie R."/>
            <person name="Wakamatsu A."/>
            <person name="Hayashi K."/>
            <person name="Sato H."/>
            <person name="Nagai K."/>
            <person name="Kimura K."/>
            <person name="Makita H."/>
            <person name="Sekine M."/>
            <person name="Obayashi M."/>
            <person name="Nishi T."/>
            <person name="Shibahara T."/>
            <person name="Tanaka T."/>
            <person name="Ishii S."/>
            <person name="Yamamoto J."/>
            <person name="Saito K."/>
            <person name="Kawai Y."/>
            <person name="Isono Y."/>
            <person name="Nakamura Y."/>
            <person name="Nagahari K."/>
            <person name="Murakami K."/>
            <person name="Yasuda T."/>
            <person name="Iwayanagi T."/>
            <person name="Wagatsuma M."/>
            <person name="Shiratori A."/>
            <person name="Sudo H."/>
            <person name="Hosoiri T."/>
            <person name="Kaku Y."/>
            <person name="Kodaira H."/>
            <person name="Kondo H."/>
            <person name="Sugawara M."/>
            <person name="Takahashi M."/>
            <person name="Kanda K."/>
            <person name="Yokoi T."/>
            <person name="Furuya T."/>
            <person name="Kikkawa E."/>
            <person name="Omura Y."/>
            <person name="Abe K."/>
            <person name="Kamihara K."/>
            <person name="Katsuta N."/>
            <person name="Sato K."/>
            <person name="Tanikawa M."/>
            <person name="Yamazaki M."/>
            <person name="Ninomiya K."/>
            <person name="Ishibashi T."/>
            <person name="Yamashita H."/>
            <person name="Murakawa K."/>
            <person name="Fujimori K."/>
            <person name="Tanai H."/>
            <person name="Kimata M."/>
            <person name="Watanabe M."/>
            <person name="Hiraoka S."/>
            <person name="Chiba Y."/>
            <person name="Ishida S."/>
            <person name="Ono Y."/>
            <person name="Takiguchi S."/>
            <person name="Watanabe S."/>
            <person name="Yosida M."/>
            <person name="Hotuta T."/>
            <person name="Kusano J."/>
            <person name="Kanehori K."/>
            <person name="Takahashi-Fujii A."/>
            <person name="Hara H."/>
            <person name="Tanase T.-O."/>
            <person name="Nomura Y."/>
            <person name="Togiya S."/>
            <person name="Komai F."/>
            <person name="Hara R."/>
            <person name="Takeuchi K."/>
            <person name="Arita M."/>
            <person name="Imose N."/>
            <person name="Musashino K."/>
            <person name="Yuuki H."/>
            <person name="Oshima A."/>
            <person name="Sasaki N."/>
            <person name="Aotsuka S."/>
            <person name="Yoshikawa Y."/>
            <person name="Matsunawa H."/>
            <person name="Ichihara T."/>
            <person name="Shiohata N."/>
            <person name="Sano S."/>
            <person name="Moriya S."/>
            <person name="Momiyama H."/>
            <person name="Satoh N."/>
            <person name="Takami S."/>
            <person name="Terashima Y."/>
            <person name="Suzuki O."/>
            <person name="Nakagawa S."/>
            <person name="Senoh A."/>
            <person name="Mizoguchi H."/>
            <person name="Goto Y."/>
            <person name="Shimizu F."/>
            <person name="Wakebe H."/>
            <person name="Hishigaki H."/>
            <person name="Watanabe T."/>
            <person name="Sugiyama A."/>
            <person name="Takemoto M."/>
            <person name="Kawakami B."/>
            <person name="Yamazaki M."/>
            <person name="Watanabe K."/>
            <person name="Kumagai A."/>
            <person name="Itakura S."/>
            <person name="Fukuzumi Y."/>
            <person name="Fujimori Y."/>
            <person name="Komiyama M."/>
            <person name="Tashiro H."/>
            <person name="Tanigami A."/>
            <person name="Fujiwara T."/>
            <person name="Ono T."/>
            <person name="Yamada K."/>
            <person name="Fujii Y."/>
            <person name="Ozaki K."/>
            <person name="Hirao M."/>
            <person name="Ohmori Y."/>
            <person name="Kawabata A."/>
            <person name="Hikiji T."/>
            <person name="Kobatake N."/>
            <person name="Inagaki H."/>
            <person name="Ikema Y."/>
            <person name="Okamoto S."/>
            <person name="Okitani R."/>
            <person name="Kawakami T."/>
            <person name="Noguchi S."/>
            <person name="Itoh T."/>
            <person name="Shigeta K."/>
            <person name="Senba T."/>
            <person name="Matsumura K."/>
            <person name="Nakajima Y."/>
            <person name="Mizuno T."/>
            <person name="Morinaga M."/>
            <person name="Sasaki M."/>
            <person name="Togashi T."/>
            <person name="Oyama M."/>
            <person name="Hata H."/>
            <person name="Watanabe M."/>
            <person name="Komatsu T."/>
            <person name="Mizushima-Sugano J."/>
            <person name="Satoh T."/>
            <person name="Shirai Y."/>
            <person name="Takahashi Y."/>
            <person name="Nakagawa K."/>
            <person name="Okumura K."/>
            <person name="Nagase T."/>
            <person name="Nomura N."/>
            <person name="Kikuchi H."/>
            <person name="Masuho Y."/>
            <person name="Yamashita R."/>
            <person name="Nakai K."/>
            <person name="Yada T."/>
            <person name="Nakamura Y."/>
            <person name="Ohara O."/>
            <person name="Isogai T."/>
            <person name="Sugano S."/>
        </authorList>
    </citation>
    <scope>NUCLEOTIDE SEQUENCE [LARGE SCALE MRNA]</scope>
</reference>
<reference key="3">
    <citation type="journal article" date="2004" name="Nature">
        <title>The DNA sequence and comparative analysis of human chromosome 10.</title>
        <authorList>
            <person name="Deloukas P."/>
            <person name="Earthrowl M.E."/>
            <person name="Grafham D.V."/>
            <person name="Rubenfield M."/>
            <person name="French L."/>
            <person name="Steward C.A."/>
            <person name="Sims S.K."/>
            <person name="Jones M.C."/>
            <person name="Searle S."/>
            <person name="Scott C."/>
            <person name="Howe K."/>
            <person name="Hunt S.E."/>
            <person name="Andrews T.D."/>
            <person name="Gilbert J.G.R."/>
            <person name="Swarbreck D."/>
            <person name="Ashurst J.L."/>
            <person name="Taylor A."/>
            <person name="Battles J."/>
            <person name="Bird C.P."/>
            <person name="Ainscough R."/>
            <person name="Almeida J.P."/>
            <person name="Ashwell R.I.S."/>
            <person name="Ambrose K.D."/>
            <person name="Babbage A.K."/>
            <person name="Bagguley C.L."/>
            <person name="Bailey J."/>
            <person name="Banerjee R."/>
            <person name="Bates K."/>
            <person name="Beasley H."/>
            <person name="Bray-Allen S."/>
            <person name="Brown A.J."/>
            <person name="Brown J.Y."/>
            <person name="Burford D.C."/>
            <person name="Burrill W."/>
            <person name="Burton J."/>
            <person name="Cahill P."/>
            <person name="Camire D."/>
            <person name="Carter N.P."/>
            <person name="Chapman J.C."/>
            <person name="Clark S.Y."/>
            <person name="Clarke G."/>
            <person name="Clee C.M."/>
            <person name="Clegg S."/>
            <person name="Corby N."/>
            <person name="Coulson A."/>
            <person name="Dhami P."/>
            <person name="Dutta I."/>
            <person name="Dunn M."/>
            <person name="Faulkner L."/>
            <person name="Frankish A."/>
            <person name="Frankland J.A."/>
            <person name="Garner P."/>
            <person name="Garnett J."/>
            <person name="Gribble S."/>
            <person name="Griffiths C."/>
            <person name="Grocock R."/>
            <person name="Gustafson E."/>
            <person name="Hammond S."/>
            <person name="Harley J.L."/>
            <person name="Hart E."/>
            <person name="Heath P.D."/>
            <person name="Ho T.P."/>
            <person name="Hopkins B."/>
            <person name="Horne J."/>
            <person name="Howden P.J."/>
            <person name="Huckle E."/>
            <person name="Hynds C."/>
            <person name="Johnson C."/>
            <person name="Johnson D."/>
            <person name="Kana A."/>
            <person name="Kay M."/>
            <person name="Kimberley A.M."/>
            <person name="Kershaw J.K."/>
            <person name="Kokkinaki M."/>
            <person name="Laird G.K."/>
            <person name="Lawlor S."/>
            <person name="Lee H.M."/>
            <person name="Leongamornlert D.A."/>
            <person name="Laird G."/>
            <person name="Lloyd C."/>
            <person name="Lloyd D.M."/>
            <person name="Loveland J."/>
            <person name="Lovell J."/>
            <person name="McLaren S."/>
            <person name="McLay K.E."/>
            <person name="McMurray A."/>
            <person name="Mashreghi-Mohammadi M."/>
            <person name="Matthews L."/>
            <person name="Milne S."/>
            <person name="Nickerson T."/>
            <person name="Nguyen M."/>
            <person name="Overton-Larty E."/>
            <person name="Palmer S.A."/>
            <person name="Pearce A.V."/>
            <person name="Peck A.I."/>
            <person name="Pelan S."/>
            <person name="Phillimore B."/>
            <person name="Porter K."/>
            <person name="Rice C.M."/>
            <person name="Rogosin A."/>
            <person name="Ross M.T."/>
            <person name="Sarafidou T."/>
            <person name="Sehra H.K."/>
            <person name="Shownkeen R."/>
            <person name="Skuce C.D."/>
            <person name="Smith M."/>
            <person name="Standring L."/>
            <person name="Sycamore N."/>
            <person name="Tester J."/>
            <person name="Thorpe A."/>
            <person name="Torcasso W."/>
            <person name="Tracey A."/>
            <person name="Tromans A."/>
            <person name="Tsolas J."/>
            <person name="Wall M."/>
            <person name="Walsh J."/>
            <person name="Wang H."/>
            <person name="Weinstock K."/>
            <person name="West A.P."/>
            <person name="Willey D.L."/>
            <person name="Whitehead S.L."/>
            <person name="Wilming L."/>
            <person name="Wray P.W."/>
            <person name="Young L."/>
            <person name="Chen Y."/>
            <person name="Lovering R.C."/>
            <person name="Moschonas N.K."/>
            <person name="Siebert R."/>
            <person name="Fechtel K."/>
            <person name="Bentley D."/>
            <person name="Durbin R.M."/>
            <person name="Hubbard T."/>
            <person name="Doucette-Stamm L."/>
            <person name="Beck S."/>
            <person name="Smith D.R."/>
            <person name="Rogers J."/>
        </authorList>
    </citation>
    <scope>NUCLEOTIDE SEQUENCE [LARGE SCALE GENOMIC DNA]</scope>
</reference>
<reference key="4">
    <citation type="submission" date="2005-09" db="EMBL/GenBank/DDBJ databases">
        <authorList>
            <person name="Mural R.J."/>
            <person name="Istrail S."/>
            <person name="Sutton G.G."/>
            <person name="Florea L."/>
            <person name="Halpern A.L."/>
            <person name="Mobarry C.M."/>
            <person name="Lippert R."/>
            <person name="Walenz B."/>
            <person name="Shatkay H."/>
            <person name="Dew I."/>
            <person name="Miller J.R."/>
            <person name="Flanigan M.J."/>
            <person name="Edwards N.J."/>
            <person name="Bolanos R."/>
            <person name="Fasulo D."/>
            <person name="Halldorsson B.V."/>
            <person name="Hannenhalli S."/>
            <person name="Turner R."/>
            <person name="Yooseph S."/>
            <person name="Lu F."/>
            <person name="Nusskern D.R."/>
            <person name="Shue B.C."/>
            <person name="Zheng X.H."/>
            <person name="Zhong F."/>
            <person name="Delcher A.L."/>
            <person name="Huson D.H."/>
            <person name="Kravitz S.A."/>
            <person name="Mouchard L."/>
            <person name="Reinert K."/>
            <person name="Remington K.A."/>
            <person name="Clark A.G."/>
            <person name="Waterman M.S."/>
            <person name="Eichler E.E."/>
            <person name="Adams M.D."/>
            <person name="Hunkapiller M.W."/>
            <person name="Myers E.W."/>
            <person name="Venter J.C."/>
        </authorList>
    </citation>
    <scope>NUCLEOTIDE SEQUENCE [LARGE SCALE GENOMIC DNA]</scope>
</reference>
<reference key="5">
    <citation type="journal article" date="2004" name="Genome Res.">
        <title>The status, quality, and expansion of the NIH full-length cDNA project: the Mammalian Gene Collection (MGC).</title>
        <authorList>
            <consortium name="The MGC Project Team"/>
        </authorList>
    </citation>
    <scope>NUCLEOTIDE SEQUENCE [LARGE SCALE MRNA]</scope>
    <source>
        <tissue>Muscle</tissue>
    </source>
</reference>
<reference key="6">
    <citation type="journal article" date="1993" name="Oncogene">
        <title>flvi-2, a target of retroviral insertional mutagenesis in feline thymic lymphosarcomas, encodes bmi-1.</title>
        <authorList>
            <person name="Levy L.S."/>
            <person name="Lobelle-Rich P.A."/>
            <person name="Overbaugh J."/>
        </authorList>
    </citation>
    <scope>NUCLEOTIDE SEQUENCE [MRNA] OF 12-300</scope>
    <source>
        <tissue>Thymus</tissue>
    </source>
</reference>
<reference key="7">
    <citation type="journal article" date="1997" name="Mol. Cell. Biol.">
        <title>Identification and characterization of interactions between the vertebrate polycomb-group protein BMI1 and human homologs of polyhomeotic.</title>
        <authorList>
            <person name="Gunster M.J."/>
            <person name="Satijn D.P.E."/>
            <person name="Hamer K.M."/>
            <person name="den Blaauwen J.L."/>
            <person name="de Bruijn D."/>
            <person name="Alkema M.J."/>
            <person name="van Lohuizen M."/>
            <person name="van Driel R."/>
            <person name="Otte A.P."/>
        </authorList>
    </citation>
    <scope>INTERACTION WITH PHC2</scope>
</reference>
<reference key="8">
    <citation type="journal article" date="1997" name="Mol. Cell. Biol.">
        <title>RING1 is associated with the polycomb group protein complex and acts as a transcriptional repressor.</title>
        <authorList>
            <person name="Satijn D.P.E."/>
            <person name="Gunster M.J."/>
            <person name="van der Vlag J."/>
            <person name="Hamer K.M."/>
            <person name="Schul W."/>
            <person name="Alkema M.J."/>
            <person name="Saurin A.J."/>
            <person name="Freemont P.S."/>
            <person name="van Driel R."/>
            <person name="Otte A.P."/>
        </authorList>
    </citation>
    <scope>INTERACTION WITH PHC2</scope>
    <scope>SUBCELLULAR LOCATION</scope>
</reference>
<reference key="9">
    <citation type="journal article" date="2002" name="Mol. Cell. Biol.">
        <title>The core of the polycomb repressive complex is compositionally and functionally conserved in flies and humans.</title>
        <authorList>
            <person name="Levine S.S."/>
            <person name="Weiss A."/>
            <person name="Erdjument-Bromage H."/>
            <person name="Shao Z."/>
            <person name="Tempst P."/>
            <person name="Kingston R.E."/>
        </authorList>
    </citation>
    <scope>IDENTIFICATION BY MASS SPECTROMETRY</scope>
    <scope>IDENTIFICATION IN A PRC1-LIKE HPRC-H COMPLEX WITH CBX2; CBX4; CBX8; PHC1; PHC2; PHC3; RING1 AND RNF2</scope>
</reference>
<reference key="10">
    <citation type="journal article" date="2004" name="Nature">
        <title>Role of histone H2A ubiquitination in Polycomb silencing.</title>
        <authorList>
            <person name="Wang H."/>
            <person name="Wang L."/>
            <person name="Erdjument-Bromage H."/>
            <person name="Vidal M."/>
            <person name="Tempst P."/>
            <person name="Jones R.S."/>
            <person name="Zhang Y."/>
        </authorList>
    </citation>
    <scope>IDENTIFICATION IN A PRC1-LIKE COMPLEX</scope>
    <scope>FUNCTION</scope>
</reference>
<reference key="11">
    <citation type="journal article" date="2005" name="Mol. Cell">
        <title>Role of Bmi-1 and Ring1A in H2A ubiquitylation and Hox gene silencing.</title>
        <authorList>
            <person name="Cao R."/>
            <person name="Tsukada Y."/>
            <person name="Zhang Y."/>
        </authorList>
    </citation>
    <scope>FUNCTION</scope>
</reference>
<reference key="12">
    <citation type="journal article" date="2005" name="Proc. Natl. Acad. Sci. U.S.A.">
        <title>Stable X chromosome inactivation involves the PRC1 Polycomb complex and requires histone MACROH2A1 and the CULLIN3/SPOP ubiquitin E3 ligase.</title>
        <authorList>
            <person name="Hernandez-Munoz I."/>
            <person name="Lund A.H."/>
            <person name="van der Stoop P."/>
            <person name="Boutsma E."/>
            <person name="Muijrers I."/>
            <person name="Verhoeven E."/>
            <person name="Nusinow D.A."/>
            <person name="Panning B."/>
            <person name="Marahrens Y."/>
            <person name="van Lohuizen M."/>
        </authorList>
    </citation>
    <scope>INTERACTION WITH SPOP</scope>
    <scope>IDENTIFICATION IN A COMPLEX WITH CUL3 AND SPOP</scope>
    <scope>UBIQUITINATION</scope>
</reference>
<reference key="13">
    <citation type="journal article" date="2006" name="Genes Dev.">
        <title>E4F1: a novel candidate factor for mediating BMI1 function in primitive hematopoietic cells.</title>
        <authorList>
            <person name="Chagraoui J."/>
            <person name="Niessen S.L."/>
            <person name="Lessard J."/>
            <person name="Girard S."/>
            <person name="Coulombe P."/>
            <person name="Sauvageau M."/>
            <person name="Meloche S."/>
            <person name="Sauvageau G."/>
        </authorList>
    </citation>
    <scope>FUNCTION</scope>
    <scope>INTERACTION WITH E4F1</scope>
    <scope>SUBCELLULAR LOCATION</scope>
</reference>
<reference key="14">
    <citation type="journal article" date="2009" name="PLoS ONE">
        <title>Several distinct polycomb complexes regulate and co-localize on the INK4a tumor suppressor locus.</title>
        <authorList>
            <person name="Maertens G.N."/>
            <person name="El Messaoudi-Aubert S."/>
            <person name="Racek T."/>
            <person name="Stock J.K."/>
            <person name="Nicholls J."/>
            <person name="Rodriguez-Niedenfuhr M."/>
            <person name="Gil J."/>
            <person name="Peters G."/>
        </authorList>
    </citation>
    <scope>IDENTIFICATION IN A PRC1-LIKE COMPLEX</scope>
    <scope>INTERACTION WITH CBX7 AND CBX8</scope>
</reference>
<reference key="15">
    <citation type="journal article" date="2011" name="Mol. Cell. Proteomics">
        <title>Interaction proteomics analysis of polycomb proteins defines distinct PRC1 Complexes in mammalian cells.</title>
        <authorList>
            <person name="Vandamme J."/>
            <person name="Volkel P."/>
            <person name="Rosnoblet C."/>
            <person name="Le Faou P."/>
            <person name="Angrand P.O."/>
        </authorList>
    </citation>
    <scope>IDENTIFICATION IN A PRC1-LIKE COMPLEX</scope>
    <scope>SUBCELLULAR LOCATION</scope>
</reference>
<reference key="16">
    <citation type="journal article" date="2015" name="Nat. Commun.">
        <title>BMI1-RING1B is an autoinhibited RING E3 ubiquitin ligase.</title>
        <authorList>
            <person name="Taherbhoy A.M."/>
            <person name="Huang O.W."/>
            <person name="Cochran A.G."/>
        </authorList>
    </citation>
    <scope>FUNCTION</scope>
    <scope>SUBUNIT</scope>
    <scope>MUTAGENESIS OF LYS-73 AND ASP-77</scope>
</reference>
<reference key="17">
    <citation type="journal article" date="2006" name="J. Biol. Chem.">
        <title>Structure of a Bmi-1-Ring1B polycomb group ubiquitin ligase complex.</title>
        <authorList>
            <person name="Li Z."/>
            <person name="Cao R."/>
            <person name="Wang M."/>
            <person name="Myers M.P."/>
            <person name="Zhang Y."/>
            <person name="Xu R.M."/>
        </authorList>
    </citation>
    <scope>X-RAY CRYSTALLOGRAPHY (2.5 ANGSTROMS) OF 5-101 IN COMPLEX WITH RNF2 AND ZINC IONS</scope>
    <scope>FUNCTION</scope>
    <scope>IDENTIFICATION BY MASS SPECTROMETRY</scope>
    <scope>SUBUNIT</scope>
</reference>
<reference evidence="22" key="18">
    <citation type="journal article" date="2011" name="EMBO J.">
        <title>Recognition of UbcH5c and the nucleosome by the Bmi1/Ring1b ubiquitin ligase complex.</title>
        <authorList>
            <person name="Bentley M.L."/>
            <person name="Corn J.E."/>
            <person name="Dong K.C."/>
            <person name="Phung Q."/>
            <person name="Cheung T.K."/>
            <person name="Cochran A.G."/>
        </authorList>
    </citation>
    <scope>X-RAY CRYSTALLOGRAPHY (2.65 ANGSTROMS) OF 1-109 IN COMPLEX WITH ZINC IONS; RNF2 AND UB2D3</scope>
    <scope>FUNCTION</scope>
    <scope>MUTAGENESIS OF LYS-62 AND ARG-64</scope>
</reference>
<reference evidence="23" key="19">
    <citation type="journal article" date="2014" name="Nature">
        <title>Crystal structure of the PRC1 ubiquitylation module bound to the nucleosome.</title>
        <authorList>
            <person name="McGinty R.K."/>
            <person name="Henrici R.C."/>
            <person name="Tan S."/>
        </authorList>
    </citation>
    <scope>X-RAY CRYSTALLOGRAPHY (3.28 ANGSTROMS) OF 2-109 IN COMPLEX WITH THE NUCLEOSOME; RNF2; UB2D3 AND ZINC IONS</scope>
    <scope>FUNCTION</scope>
    <scope>MUTAGENESIS OF ARG-64</scope>
</reference>
<reference evidence="21 24" key="20">
    <citation type="journal article" date="2016" name="Nat. Commun.">
        <title>BMI1 regulates PRC1 architecture and activity through homo- and hetero-oligomerization.</title>
        <authorList>
            <person name="Gray F."/>
            <person name="Cho H.J."/>
            <person name="Shukla S."/>
            <person name="He S."/>
            <person name="Harris A."/>
            <person name="Boytsov B."/>
            <person name="Jaremko L."/>
            <person name="Jaremko M."/>
            <person name="Demeler B."/>
            <person name="Lawlor E.R."/>
            <person name="Grembecka J."/>
            <person name="Cierpicki T."/>
        </authorList>
    </citation>
    <scope>X-RAY CRYSTALLOGRAPHY (2.51 ANGSTROMS) OF 121-235</scope>
    <scope>STRUCTURE BY NMR OF 121-235 IN COMPLEX WITH PHC2</scope>
    <scope>FUNCTION</scope>
    <scope>MUTAGENESIS OF ARG-165; MET-170 AND HIS-174</scope>
</reference>
<accession>P35226</accession>
<accession>Q16030</accession>
<accession>Q5T8Z3</accession>
<accession>Q96F37</accession>